<accession>O31869</accession>
<organism>
    <name type="scientific">Bacillus subtilis (strain 168)</name>
    <dbReference type="NCBI Taxonomy" id="224308"/>
    <lineage>
        <taxon>Bacteria</taxon>
        <taxon>Bacillati</taxon>
        <taxon>Bacillota</taxon>
        <taxon>Bacilli</taxon>
        <taxon>Bacillales</taxon>
        <taxon>Bacillaceae</taxon>
        <taxon>Bacillus</taxon>
    </lineage>
</organism>
<gene>
    <name type="primary">yotF</name>
    <name type="ordered locus">BSU19900</name>
</gene>
<dbReference type="EMBL" id="AL009126">
    <property type="protein sequence ID" value="CAB13881.1"/>
    <property type="molecule type" value="Genomic_DNA"/>
</dbReference>
<dbReference type="RefSeq" id="NP_389871.1">
    <property type="nucleotide sequence ID" value="NC_000964.3"/>
</dbReference>
<dbReference type="RefSeq" id="WP_010886536.1">
    <property type="nucleotide sequence ID" value="NZ_OZ025638.1"/>
</dbReference>
<dbReference type="FunCoup" id="O31869">
    <property type="interactions" value="25"/>
</dbReference>
<dbReference type="STRING" id="224308.BSU19900"/>
<dbReference type="PaxDb" id="224308-BSU19900"/>
<dbReference type="EnsemblBacteria" id="CAB13881">
    <property type="protein sequence ID" value="CAB13881"/>
    <property type="gene ID" value="BSU_19900"/>
</dbReference>
<dbReference type="GeneID" id="940086"/>
<dbReference type="KEGG" id="bsu:BSU19900"/>
<dbReference type="InParanoid" id="O31869"/>
<dbReference type="BioCyc" id="BSUB:BSU19900-MONOMER"/>
<dbReference type="Proteomes" id="UP000001570">
    <property type="component" value="Chromosome"/>
</dbReference>
<feature type="chain" id="PRO_0000369429" description="SPbeta prophage-derived uncharacterized protein YotF">
    <location>
        <begin position="1"/>
        <end position="25"/>
    </location>
</feature>
<name>YOTF_BACSU</name>
<proteinExistence type="predicted"/>
<protein>
    <recommendedName>
        <fullName>SPbeta prophage-derived uncharacterized protein YotF</fullName>
    </recommendedName>
</protein>
<keyword id="KW-1185">Reference proteome</keyword>
<sequence>MENVMSWFNIDFEIKSDNNIDKTLL</sequence>
<reference key="1">
    <citation type="journal article" date="1997" name="Nature">
        <title>The complete genome sequence of the Gram-positive bacterium Bacillus subtilis.</title>
        <authorList>
            <person name="Kunst F."/>
            <person name="Ogasawara N."/>
            <person name="Moszer I."/>
            <person name="Albertini A.M."/>
            <person name="Alloni G."/>
            <person name="Azevedo V."/>
            <person name="Bertero M.G."/>
            <person name="Bessieres P."/>
            <person name="Bolotin A."/>
            <person name="Borchert S."/>
            <person name="Borriss R."/>
            <person name="Boursier L."/>
            <person name="Brans A."/>
            <person name="Braun M."/>
            <person name="Brignell S.C."/>
            <person name="Bron S."/>
            <person name="Brouillet S."/>
            <person name="Bruschi C.V."/>
            <person name="Caldwell B."/>
            <person name="Capuano V."/>
            <person name="Carter N.M."/>
            <person name="Choi S.-K."/>
            <person name="Codani J.-J."/>
            <person name="Connerton I.F."/>
            <person name="Cummings N.J."/>
            <person name="Daniel R.A."/>
            <person name="Denizot F."/>
            <person name="Devine K.M."/>
            <person name="Duesterhoeft A."/>
            <person name="Ehrlich S.D."/>
            <person name="Emmerson P.T."/>
            <person name="Entian K.-D."/>
            <person name="Errington J."/>
            <person name="Fabret C."/>
            <person name="Ferrari E."/>
            <person name="Foulger D."/>
            <person name="Fritz C."/>
            <person name="Fujita M."/>
            <person name="Fujita Y."/>
            <person name="Fuma S."/>
            <person name="Galizzi A."/>
            <person name="Galleron N."/>
            <person name="Ghim S.-Y."/>
            <person name="Glaser P."/>
            <person name="Goffeau A."/>
            <person name="Golightly E.J."/>
            <person name="Grandi G."/>
            <person name="Guiseppi G."/>
            <person name="Guy B.J."/>
            <person name="Haga K."/>
            <person name="Haiech J."/>
            <person name="Harwood C.R."/>
            <person name="Henaut A."/>
            <person name="Hilbert H."/>
            <person name="Holsappel S."/>
            <person name="Hosono S."/>
            <person name="Hullo M.-F."/>
            <person name="Itaya M."/>
            <person name="Jones L.-M."/>
            <person name="Joris B."/>
            <person name="Karamata D."/>
            <person name="Kasahara Y."/>
            <person name="Klaerr-Blanchard M."/>
            <person name="Klein C."/>
            <person name="Kobayashi Y."/>
            <person name="Koetter P."/>
            <person name="Koningstein G."/>
            <person name="Krogh S."/>
            <person name="Kumano M."/>
            <person name="Kurita K."/>
            <person name="Lapidus A."/>
            <person name="Lardinois S."/>
            <person name="Lauber J."/>
            <person name="Lazarevic V."/>
            <person name="Lee S.-M."/>
            <person name="Levine A."/>
            <person name="Liu H."/>
            <person name="Masuda S."/>
            <person name="Mauel C."/>
            <person name="Medigue C."/>
            <person name="Medina N."/>
            <person name="Mellado R.P."/>
            <person name="Mizuno M."/>
            <person name="Moestl D."/>
            <person name="Nakai S."/>
            <person name="Noback M."/>
            <person name="Noone D."/>
            <person name="O'Reilly M."/>
            <person name="Ogawa K."/>
            <person name="Ogiwara A."/>
            <person name="Oudega B."/>
            <person name="Park S.-H."/>
            <person name="Parro V."/>
            <person name="Pohl T.M."/>
            <person name="Portetelle D."/>
            <person name="Porwollik S."/>
            <person name="Prescott A.M."/>
            <person name="Presecan E."/>
            <person name="Pujic P."/>
            <person name="Purnelle B."/>
            <person name="Rapoport G."/>
            <person name="Rey M."/>
            <person name="Reynolds S."/>
            <person name="Rieger M."/>
            <person name="Rivolta C."/>
            <person name="Rocha E."/>
            <person name="Roche B."/>
            <person name="Rose M."/>
            <person name="Sadaie Y."/>
            <person name="Sato T."/>
            <person name="Scanlan E."/>
            <person name="Schleich S."/>
            <person name="Schroeter R."/>
            <person name="Scoffone F."/>
            <person name="Sekiguchi J."/>
            <person name="Sekowska A."/>
            <person name="Seror S.J."/>
            <person name="Serror P."/>
            <person name="Shin B.-S."/>
            <person name="Soldo B."/>
            <person name="Sorokin A."/>
            <person name="Tacconi E."/>
            <person name="Takagi T."/>
            <person name="Takahashi H."/>
            <person name="Takemaru K."/>
            <person name="Takeuchi M."/>
            <person name="Tamakoshi A."/>
            <person name="Tanaka T."/>
            <person name="Terpstra P."/>
            <person name="Tognoni A."/>
            <person name="Tosato V."/>
            <person name="Uchiyama S."/>
            <person name="Vandenbol M."/>
            <person name="Vannier F."/>
            <person name="Vassarotti A."/>
            <person name="Viari A."/>
            <person name="Wambutt R."/>
            <person name="Wedler E."/>
            <person name="Wedler H."/>
            <person name="Weitzenegger T."/>
            <person name="Winters P."/>
            <person name="Wipat A."/>
            <person name="Yamamoto H."/>
            <person name="Yamane K."/>
            <person name="Yasumoto K."/>
            <person name="Yata K."/>
            <person name="Yoshida K."/>
            <person name="Yoshikawa H.-F."/>
            <person name="Zumstein E."/>
            <person name="Yoshikawa H."/>
            <person name="Danchin A."/>
        </authorList>
    </citation>
    <scope>NUCLEOTIDE SEQUENCE [LARGE SCALE GENOMIC DNA]</scope>
    <source>
        <strain>168</strain>
    </source>
</reference>